<gene>
    <name evidence="1" type="primary">L2</name>
</gene>
<evidence type="ECO:0000255" key="1">
    <source>
        <dbReference type="HAMAP-Rule" id="MF_04003"/>
    </source>
</evidence>
<sequence>MVSHTHKRRKRASATQLYQTCKAAGTCPSDVINKVEHTTIADQILKWASMGVYFGGLGIGTGSGTGGRTGYVPLTTGRTGIVPKVTAEPGVVSRPPIVVESVAPTDPSIVSLIEESSIIQSGAPITNIPSHGGFEVTSSGSEVPAILDVSPSTSVHITTSTHLNPAFTDPTIVQPTPPVEAGGRIIISHSTVTADSAEQIPMDTFVIHSDPTTSTPIPGTAPRPRLGLYSKALQQVEIVDPTFLSSPQRLITYDNPVFEDPNATLTFEQPTVHEAPDSRFMDIVTLHRPALTSRRGIVRFSRVGARGTMYTRSGIRIGGRVHFFTDISSIPTEESIELQPLGRSQSFPTVSDTSDLYDIYADENLLNNDISFTDTHVSLQNSTKVVNTAVPLATVPDIYAQTGPDISFPTIPIHIPYIPVSPSISPQSVSIHGTDFYLHPSLWHLGKRRKRFSYFFTDNYVAA</sequence>
<organismHost>
    <name type="scientific">Homo sapiens</name>
    <name type="common">Human</name>
    <dbReference type="NCBI Taxonomy" id="9606"/>
</organismHost>
<feature type="chain" id="PRO_0000133610" description="Minor capsid protein L2">
    <location>
        <begin position="1"/>
        <end position="463"/>
    </location>
</feature>
<feature type="short sequence motif" description="Nuclear localization signal" evidence="1">
    <location>
        <begin position="1"/>
        <end position="12"/>
    </location>
</feature>
<feature type="short sequence motif" description="Nuclear localization signal" evidence="1">
    <location>
        <begin position="444"/>
        <end position="452"/>
    </location>
</feature>
<feature type="disulfide bond" evidence="1">
    <location>
        <begin position="21"/>
        <end position="27"/>
    </location>
</feature>
<protein>
    <recommendedName>
        <fullName evidence="1">Minor capsid protein L2</fullName>
    </recommendedName>
</protein>
<organism>
    <name type="scientific">Human papillomavirus 43</name>
    <dbReference type="NCBI Taxonomy" id="10591"/>
    <lineage>
        <taxon>Viruses</taxon>
        <taxon>Monodnaviria</taxon>
        <taxon>Shotokuvirae</taxon>
        <taxon>Cossaviricota</taxon>
        <taxon>Papovaviricetes</taxon>
        <taxon>Zurhausenvirales</taxon>
        <taxon>Papillomaviridae</taxon>
        <taxon>Firstpapillomavirinae</taxon>
        <taxon>Alphapapillomavirus</taxon>
        <taxon>Alphapapillomavirus 8</taxon>
    </lineage>
</organism>
<comment type="function">
    <text evidence="1">Minor protein of the capsid that localizes along the inner surface of the virion, within the central cavities beneath the L1 pentamers. Plays a role in capsid stabilization through interaction with the major capsid protein L1. Once the virion enters the host cell, L2 escorts the genomic DNA into the nucleus by promoting escape from the endosomal compartments and traffic through the host Golgi network. Mechanistically, the C-terminus of L2 possesses a cell-penetrating peptide that protudes from the host endosome, interacts with host cytoplasmic retromer cargo and thereby mediates the capsid delivery to the host trans-Golgi network. Plays a role through its interaction with host dynein in the intracellular microtubule-dependent transport of viral capsid toward the nucleus. Mediates the viral genome import into the nucleus through binding to host importins. Once within the nucleus, L2 localizes viral genomes to host PML bodies in order to activate early gene expression for establishment of infection. Later on, promotes late gene expression by interacting with the viral E2 protein and by inhibiting its transcriptional activation functions. During virion assembly, encapsidates the genome by direct interaction with the viral DNA.</text>
</comment>
<comment type="subunit">
    <text evidence="1">Interacts with major capsid protein L1. Interacts with E2; this interaction inhibits E2 transcriptional activity but not the DNA replication function E2. Interacts with host GADD45GIP1. Interacts with host HSPA8; this interaction is required for L2 nuclear translocation. Interacts with host importins KPNB2 and KPNB3. Forms a complex with importin alpha2-beta1 heterodimers via interaction with the importin alpha2 adapter. Interacts with host DYNLT1; this interaction is essential for virus intracellular transport during entry. Interacts (via C-terminus) with host retromer subunits VPS35 and VPS29.</text>
</comment>
<comment type="subcellular location">
    <subcellularLocation>
        <location evidence="1">Virion</location>
    </subcellularLocation>
    <subcellularLocation>
        <location evidence="1">Host nucleus</location>
    </subcellularLocation>
    <subcellularLocation>
        <location evidence="1">Host early endosome</location>
    </subcellularLocation>
    <subcellularLocation>
        <location evidence="1">Host Golgi apparatus</location>
    </subcellularLocation>
</comment>
<comment type="PTM">
    <text evidence="1">Highly phosphorylated.</text>
</comment>
<comment type="similarity">
    <text evidence="1">Belongs to the papillomaviridae L2 protein family.</text>
</comment>
<name>VL2_HPV43</name>
<dbReference type="EMBL" id="AJ620205">
    <property type="protein sequence ID" value="CAF05788.1"/>
    <property type="molecule type" value="Genomic_DNA"/>
</dbReference>
<dbReference type="SMR" id="Q705H5"/>
<dbReference type="Proteomes" id="UP000118566">
    <property type="component" value="Genome"/>
</dbReference>
<dbReference type="GO" id="GO:0043657">
    <property type="term" value="C:host cell"/>
    <property type="evidence" value="ECO:0007669"/>
    <property type="project" value="GOC"/>
</dbReference>
<dbReference type="GO" id="GO:0044174">
    <property type="term" value="C:host cell endosome"/>
    <property type="evidence" value="ECO:0007669"/>
    <property type="project" value="UniProtKB-KW"/>
</dbReference>
<dbReference type="GO" id="GO:0044177">
    <property type="term" value="C:host cell Golgi apparatus"/>
    <property type="evidence" value="ECO:0007669"/>
    <property type="project" value="UniProtKB-SubCell"/>
</dbReference>
<dbReference type="GO" id="GO:0042025">
    <property type="term" value="C:host cell nucleus"/>
    <property type="evidence" value="ECO:0007669"/>
    <property type="project" value="UniProtKB-SubCell"/>
</dbReference>
<dbReference type="GO" id="GO:0019028">
    <property type="term" value="C:viral capsid"/>
    <property type="evidence" value="ECO:0007669"/>
    <property type="project" value="UniProtKB-UniRule"/>
</dbReference>
<dbReference type="GO" id="GO:0003677">
    <property type="term" value="F:DNA binding"/>
    <property type="evidence" value="ECO:0007669"/>
    <property type="project" value="UniProtKB-UniRule"/>
</dbReference>
<dbReference type="GO" id="GO:0005198">
    <property type="term" value="F:structural molecule activity"/>
    <property type="evidence" value="ECO:0007669"/>
    <property type="project" value="UniProtKB-UniRule"/>
</dbReference>
<dbReference type="GO" id="GO:0075521">
    <property type="term" value="P:microtubule-dependent intracellular transport of viral material towards nucleus"/>
    <property type="evidence" value="ECO:0007669"/>
    <property type="project" value="UniProtKB-UniRule"/>
</dbReference>
<dbReference type="GO" id="GO:0046718">
    <property type="term" value="P:symbiont entry into host cell"/>
    <property type="evidence" value="ECO:0007669"/>
    <property type="project" value="UniProtKB-KW"/>
</dbReference>
<dbReference type="GO" id="GO:0075732">
    <property type="term" value="P:viral penetration into host nucleus"/>
    <property type="evidence" value="ECO:0007669"/>
    <property type="project" value="UniProtKB-KW"/>
</dbReference>
<dbReference type="HAMAP" id="MF_04003">
    <property type="entry name" value="PPV_L2"/>
    <property type="match status" value="1"/>
</dbReference>
<dbReference type="InterPro" id="IPR000784">
    <property type="entry name" value="Late_L2"/>
</dbReference>
<dbReference type="Pfam" id="PF00513">
    <property type="entry name" value="Late_protein_L2"/>
    <property type="match status" value="1"/>
</dbReference>
<reference key="1">
    <citation type="submission" date="2004-01" db="EMBL/GenBank/DDBJ databases">
        <title>Cloning and sequencing of the full-length genome of HPV 43.</title>
        <authorList>
            <person name="Matsukura T."/>
            <person name="Delius H."/>
            <person name="Sugase M."/>
        </authorList>
    </citation>
    <scope>NUCLEOTIDE SEQUENCE [GENOMIC DNA]</scope>
</reference>
<keyword id="KW-0167">Capsid protein</keyword>
<keyword id="KW-1176">Cytoplasmic inwards viral transport</keyword>
<keyword id="KW-1015">Disulfide bond</keyword>
<keyword id="KW-0238">DNA-binding</keyword>
<keyword id="KW-1039">Host endosome</keyword>
<keyword id="KW-1040">Host Golgi apparatus</keyword>
<keyword id="KW-1048">Host nucleus</keyword>
<keyword id="KW-0945">Host-virus interaction</keyword>
<keyword id="KW-0426">Late protein</keyword>
<keyword id="KW-1177">Microtubular inwards viral transport</keyword>
<keyword id="KW-0597">Phosphoprotein</keyword>
<keyword id="KW-1163">Viral penetration into host nucleus</keyword>
<keyword id="KW-0946">Virion</keyword>
<keyword id="KW-1160">Virus entry into host cell</keyword>
<proteinExistence type="inferred from homology"/>
<accession>Q705H5</accession>